<dbReference type="EC" id="4.2.1.20" evidence="1"/>
<dbReference type="EMBL" id="CP000142">
    <property type="protein sequence ID" value="ABA89480.1"/>
    <property type="molecule type" value="Genomic_DNA"/>
</dbReference>
<dbReference type="RefSeq" id="WP_011341995.1">
    <property type="nucleotide sequence ID" value="NC_007498.2"/>
</dbReference>
<dbReference type="SMR" id="Q3A2C7"/>
<dbReference type="STRING" id="338963.Pcar_2241"/>
<dbReference type="KEGG" id="pca:Pcar_2241"/>
<dbReference type="eggNOG" id="COG0159">
    <property type="taxonomic scope" value="Bacteria"/>
</dbReference>
<dbReference type="HOGENOM" id="CLU_016734_0_4_7"/>
<dbReference type="OrthoDB" id="9804578at2"/>
<dbReference type="UniPathway" id="UPA00035">
    <property type="reaction ID" value="UER00044"/>
</dbReference>
<dbReference type="Proteomes" id="UP000002534">
    <property type="component" value="Chromosome"/>
</dbReference>
<dbReference type="GO" id="GO:0005829">
    <property type="term" value="C:cytosol"/>
    <property type="evidence" value="ECO:0007669"/>
    <property type="project" value="TreeGrafter"/>
</dbReference>
<dbReference type="GO" id="GO:0004834">
    <property type="term" value="F:tryptophan synthase activity"/>
    <property type="evidence" value="ECO:0007669"/>
    <property type="project" value="UniProtKB-UniRule"/>
</dbReference>
<dbReference type="CDD" id="cd04724">
    <property type="entry name" value="Tryptophan_synthase_alpha"/>
    <property type="match status" value="1"/>
</dbReference>
<dbReference type="FunFam" id="3.20.20.70:FF:000037">
    <property type="entry name" value="Tryptophan synthase alpha chain"/>
    <property type="match status" value="1"/>
</dbReference>
<dbReference type="Gene3D" id="3.20.20.70">
    <property type="entry name" value="Aldolase class I"/>
    <property type="match status" value="1"/>
</dbReference>
<dbReference type="HAMAP" id="MF_00131">
    <property type="entry name" value="Trp_synth_alpha"/>
    <property type="match status" value="1"/>
</dbReference>
<dbReference type="InterPro" id="IPR013785">
    <property type="entry name" value="Aldolase_TIM"/>
</dbReference>
<dbReference type="InterPro" id="IPR011060">
    <property type="entry name" value="RibuloseP-bd_barrel"/>
</dbReference>
<dbReference type="InterPro" id="IPR018204">
    <property type="entry name" value="Trp_synthase_alpha_AS"/>
</dbReference>
<dbReference type="InterPro" id="IPR002028">
    <property type="entry name" value="Trp_synthase_suA"/>
</dbReference>
<dbReference type="NCBIfam" id="TIGR00262">
    <property type="entry name" value="trpA"/>
    <property type="match status" value="1"/>
</dbReference>
<dbReference type="PANTHER" id="PTHR43406:SF1">
    <property type="entry name" value="TRYPTOPHAN SYNTHASE ALPHA CHAIN, CHLOROPLASTIC"/>
    <property type="match status" value="1"/>
</dbReference>
<dbReference type="PANTHER" id="PTHR43406">
    <property type="entry name" value="TRYPTOPHAN SYNTHASE, ALPHA CHAIN"/>
    <property type="match status" value="1"/>
</dbReference>
<dbReference type="Pfam" id="PF00290">
    <property type="entry name" value="Trp_syntA"/>
    <property type="match status" value="1"/>
</dbReference>
<dbReference type="SUPFAM" id="SSF51366">
    <property type="entry name" value="Ribulose-phoshate binding barrel"/>
    <property type="match status" value="1"/>
</dbReference>
<dbReference type="PROSITE" id="PS00167">
    <property type="entry name" value="TRP_SYNTHASE_ALPHA"/>
    <property type="match status" value="1"/>
</dbReference>
<protein>
    <recommendedName>
        <fullName evidence="1">Tryptophan synthase alpha chain</fullName>
        <ecNumber evidence="1">4.2.1.20</ecNumber>
    </recommendedName>
</protein>
<organism>
    <name type="scientific">Syntrophotalea carbinolica (strain DSM 2380 / NBRC 103641 / GraBd1)</name>
    <name type="common">Pelobacter carbinolicus</name>
    <dbReference type="NCBI Taxonomy" id="338963"/>
    <lineage>
        <taxon>Bacteria</taxon>
        <taxon>Pseudomonadati</taxon>
        <taxon>Thermodesulfobacteriota</taxon>
        <taxon>Desulfuromonadia</taxon>
        <taxon>Desulfuromonadales</taxon>
        <taxon>Syntrophotaleaceae</taxon>
        <taxon>Syntrophotalea</taxon>
    </lineage>
</organism>
<sequence length="253" mass="27719">MLETTIRNKLAQKDILLMTHIVIGYPDLDTSFEVVRTMVEAGVDLMELQIPFSEPMADGPVILKANQDALATGITVDECFDFAEKVAAAYDIPFLFMTYYNILFKYGVEAFAERMAKCGLCGAIVPDLPPEEADDYLAAMNKHGMAPIFIYAPNTTEARMQRIAEHGKGFIYCMARKGVTGLQTDFSGQLGDHLDHCRASTQLPLALGFGVKDRADVEFIKGKADIAVVGSQAIRVLDEGGVPAVEAFIRSLR</sequence>
<reference key="1">
    <citation type="submission" date="2005-10" db="EMBL/GenBank/DDBJ databases">
        <title>Complete sequence of Pelobacter carbinolicus DSM 2380.</title>
        <authorList>
            <person name="Copeland A."/>
            <person name="Lucas S."/>
            <person name="Lapidus A."/>
            <person name="Barry K."/>
            <person name="Detter J.C."/>
            <person name="Glavina T."/>
            <person name="Hammon N."/>
            <person name="Israni S."/>
            <person name="Pitluck S."/>
            <person name="Chertkov O."/>
            <person name="Schmutz J."/>
            <person name="Larimer F."/>
            <person name="Land M."/>
            <person name="Kyrpides N."/>
            <person name="Ivanova N."/>
            <person name="Richardson P."/>
        </authorList>
    </citation>
    <scope>NUCLEOTIDE SEQUENCE [LARGE SCALE GENOMIC DNA]</scope>
    <source>
        <strain>DSM 2380 / NBRC 103641 / GraBd1</strain>
    </source>
</reference>
<feature type="chain" id="PRO_1000057855" description="Tryptophan synthase alpha chain">
    <location>
        <begin position="1"/>
        <end position="253"/>
    </location>
</feature>
<feature type="active site" description="Proton acceptor" evidence="1">
    <location>
        <position position="47"/>
    </location>
</feature>
<feature type="active site" description="Proton acceptor" evidence="1">
    <location>
        <position position="58"/>
    </location>
</feature>
<evidence type="ECO:0000255" key="1">
    <source>
        <dbReference type="HAMAP-Rule" id="MF_00131"/>
    </source>
</evidence>
<name>TRPA_SYNC1</name>
<gene>
    <name evidence="1" type="primary">trpA</name>
    <name type="ordered locus">Pcar_2241</name>
</gene>
<proteinExistence type="inferred from homology"/>
<accession>Q3A2C7</accession>
<keyword id="KW-0028">Amino-acid biosynthesis</keyword>
<keyword id="KW-0057">Aromatic amino acid biosynthesis</keyword>
<keyword id="KW-0456">Lyase</keyword>
<keyword id="KW-1185">Reference proteome</keyword>
<keyword id="KW-0822">Tryptophan biosynthesis</keyword>
<comment type="function">
    <text evidence="1">The alpha subunit is responsible for the aldol cleavage of indoleglycerol phosphate to indole and glyceraldehyde 3-phosphate.</text>
</comment>
<comment type="catalytic activity">
    <reaction evidence="1">
        <text>(1S,2R)-1-C-(indol-3-yl)glycerol 3-phosphate + L-serine = D-glyceraldehyde 3-phosphate + L-tryptophan + H2O</text>
        <dbReference type="Rhea" id="RHEA:10532"/>
        <dbReference type="ChEBI" id="CHEBI:15377"/>
        <dbReference type="ChEBI" id="CHEBI:33384"/>
        <dbReference type="ChEBI" id="CHEBI:57912"/>
        <dbReference type="ChEBI" id="CHEBI:58866"/>
        <dbReference type="ChEBI" id="CHEBI:59776"/>
        <dbReference type="EC" id="4.2.1.20"/>
    </reaction>
</comment>
<comment type="pathway">
    <text evidence="1">Amino-acid biosynthesis; L-tryptophan biosynthesis; L-tryptophan from chorismate: step 5/5.</text>
</comment>
<comment type="subunit">
    <text evidence="1">Tetramer of two alpha and two beta chains.</text>
</comment>
<comment type="similarity">
    <text evidence="1">Belongs to the TrpA family.</text>
</comment>